<reference key="1">
    <citation type="journal article" date="2005" name="Nat. Biotechnol.">
        <title>Complete genome sequence of the acetic acid bacterium Gluconobacter oxydans.</title>
        <authorList>
            <person name="Prust C."/>
            <person name="Hoffmeister M."/>
            <person name="Liesegang H."/>
            <person name="Wiezer A."/>
            <person name="Fricke W.F."/>
            <person name="Ehrenreich A."/>
            <person name="Gottschalk G."/>
            <person name="Deppenmeier U."/>
        </authorList>
    </citation>
    <scope>NUCLEOTIDE SEQUENCE [LARGE SCALE GENOMIC DNA]</scope>
    <source>
        <strain>621H</strain>
    </source>
</reference>
<proteinExistence type="inferred from homology"/>
<sequence length="242" mass="26828">MTISSNTALVLFSGGQDSATCLAWALSRFDRVETVGYAYGQRHAIELECRETLRNEMAAFSPDWKARLGEDHTIDLASLGALSETALTREAEIGLSENGLPNTFVPGRNIIFLTFAAALAARRNARHIVTGVCETDYSGYPDCRDDTIKALQVTLNLGMDQRFVLHTPLMWIDKAQTWDLTEELGGQKLVNLINRDSHSCYMGDRTHQHDWGYGCGTCPACNLRADGWRRYQQSRPSHGGAA</sequence>
<name>QUEC_GLUOX</name>
<gene>
    <name evidence="1" type="primary">queC</name>
    <name type="ordered locus">GOX1542</name>
</gene>
<comment type="function">
    <text evidence="1">Catalyzes the ATP-dependent conversion of 7-carboxy-7-deazaguanine (CDG) to 7-cyano-7-deazaguanine (preQ(0)).</text>
</comment>
<comment type="catalytic activity">
    <reaction evidence="1">
        <text>7-carboxy-7-deazaguanine + NH4(+) + ATP = 7-cyano-7-deazaguanine + ADP + phosphate + H2O + H(+)</text>
        <dbReference type="Rhea" id="RHEA:27982"/>
        <dbReference type="ChEBI" id="CHEBI:15377"/>
        <dbReference type="ChEBI" id="CHEBI:15378"/>
        <dbReference type="ChEBI" id="CHEBI:28938"/>
        <dbReference type="ChEBI" id="CHEBI:30616"/>
        <dbReference type="ChEBI" id="CHEBI:43474"/>
        <dbReference type="ChEBI" id="CHEBI:45075"/>
        <dbReference type="ChEBI" id="CHEBI:61036"/>
        <dbReference type="ChEBI" id="CHEBI:456216"/>
        <dbReference type="EC" id="6.3.4.20"/>
    </reaction>
</comment>
<comment type="cofactor">
    <cofactor evidence="1">
        <name>Zn(2+)</name>
        <dbReference type="ChEBI" id="CHEBI:29105"/>
    </cofactor>
    <text evidence="1">Binds 1 zinc ion per subunit.</text>
</comment>
<comment type="pathway">
    <text evidence="1">Purine metabolism; 7-cyano-7-deazaguanine biosynthesis.</text>
</comment>
<comment type="similarity">
    <text evidence="1">Belongs to the QueC family.</text>
</comment>
<organism>
    <name type="scientific">Gluconobacter oxydans (strain 621H)</name>
    <name type="common">Gluconobacter suboxydans</name>
    <dbReference type="NCBI Taxonomy" id="290633"/>
    <lineage>
        <taxon>Bacteria</taxon>
        <taxon>Pseudomonadati</taxon>
        <taxon>Pseudomonadota</taxon>
        <taxon>Alphaproteobacteria</taxon>
        <taxon>Acetobacterales</taxon>
        <taxon>Acetobacteraceae</taxon>
        <taxon>Gluconobacter</taxon>
    </lineage>
</organism>
<feature type="chain" id="PRO_0000246848" description="7-cyano-7-deazaguanine synthase">
    <location>
        <begin position="1"/>
        <end position="242"/>
    </location>
</feature>
<feature type="binding site" evidence="1">
    <location>
        <begin position="12"/>
        <end position="22"/>
    </location>
    <ligand>
        <name>ATP</name>
        <dbReference type="ChEBI" id="CHEBI:30616"/>
    </ligand>
</feature>
<feature type="binding site" evidence="1">
    <location>
        <position position="200"/>
    </location>
    <ligand>
        <name>Zn(2+)</name>
        <dbReference type="ChEBI" id="CHEBI:29105"/>
    </ligand>
</feature>
<feature type="binding site" evidence="1">
    <location>
        <position position="215"/>
    </location>
    <ligand>
        <name>Zn(2+)</name>
        <dbReference type="ChEBI" id="CHEBI:29105"/>
    </ligand>
</feature>
<feature type="binding site" evidence="1">
    <location>
        <position position="218"/>
    </location>
    <ligand>
        <name>Zn(2+)</name>
        <dbReference type="ChEBI" id="CHEBI:29105"/>
    </ligand>
</feature>
<feature type="binding site" evidence="1">
    <location>
        <position position="221"/>
    </location>
    <ligand>
        <name>Zn(2+)</name>
        <dbReference type="ChEBI" id="CHEBI:29105"/>
    </ligand>
</feature>
<protein>
    <recommendedName>
        <fullName evidence="1">7-cyano-7-deazaguanine synthase</fullName>
        <ecNumber evidence="1">6.3.4.20</ecNumber>
    </recommendedName>
    <alternativeName>
        <fullName evidence="1">7-cyano-7-carbaguanine synthase</fullName>
    </alternativeName>
    <alternativeName>
        <fullName evidence="1">PreQ(0) synthase</fullName>
    </alternativeName>
    <alternativeName>
        <fullName evidence="1">Queuosine biosynthesis protein QueC</fullName>
    </alternativeName>
</protein>
<keyword id="KW-0067">ATP-binding</keyword>
<keyword id="KW-0436">Ligase</keyword>
<keyword id="KW-0479">Metal-binding</keyword>
<keyword id="KW-0547">Nucleotide-binding</keyword>
<keyword id="KW-0671">Queuosine biosynthesis</keyword>
<keyword id="KW-1185">Reference proteome</keyword>
<keyword id="KW-0862">Zinc</keyword>
<dbReference type="EC" id="6.3.4.20" evidence="1"/>
<dbReference type="EMBL" id="CP000009">
    <property type="protein sequence ID" value="AAW61284.1"/>
    <property type="molecule type" value="Genomic_DNA"/>
</dbReference>
<dbReference type="RefSeq" id="WP_011253069.1">
    <property type="nucleotide sequence ID" value="NC_006677.1"/>
</dbReference>
<dbReference type="SMR" id="Q5FQR2"/>
<dbReference type="STRING" id="290633.GOX1542"/>
<dbReference type="KEGG" id="gox:GOX1542"/>
<dbReference type="eggNOG" id="COG0603">
    <property type="taxonomic scope" value="Bacteria"/>
</dbReference>
<dbReference type="HOGENOM" id="CLU_081854_0_0_5"/>
<dbReference type="UniPathway" id="UPA00391"/>
<dbReference type="Proteomes" id="UP000006375">
    <property type="component" value="Chromosome"/>
</dbReference>
<dbReference type="GO" id="GO:0005524">
    <property type="term" value="F:ATP binding"/>
    <property type="evidence" value="ECO:0007669"/>
    <property type="project" value="UniProtKB-UniRule"/>
</dbReference>
<dbReference type="GO" id="GO:0016879">
    <property type="term" value="F:ligase activity, forming carbon-nitrogen bonds"/>
    <property type="evidence" value="ECO:0007669"/>
    <property type="project" value="UniProtKB-UniRule"/>
</dbReference>
<dbReference type="GO" id="GO:0008270">
    <property type="term" value="F:zinc ion binding"/>
    <property type="evidence" value="ECO:0007669"/>
    <property type="project" value="UniProtKB-UniRule"/>
</dbReference>
<dbReference type="GO" id="GO:0008616">
    <property type="term" value="P:queuosine biosynthetic process"/>
    <property type="evidence" value="ECO:0007669"/>
    <property type="project" value="UniProtKB-UniRule"/>
</dbReference>
<dbReference type="CDD" id="cd01995">
    <property type="entry name" value="QueC-like"/>
    <property type="match status" value="1"/>
</dbReference>
<dbReference type="Gene3D" id="3.40.50.620">
    <property type="entry name" value="HUPs"/>
    <property type="match status" value="1"/>
</dbReference>
<dbReference type="HAMAP" id="MF_01633">
    <property type="entry name" value="QueC"/>
    <property type="match status" value="1"/>
</dbReference>
<dbReference type="InterPro" id="IPR018317">
    <property type="entry name" value="QueC"/>
</dbReference>
<dbReference type="InterPro" id="IPR014729">
    <property type="entry name" value="Rossmann-like_a/b/a_fold"/>
</dbReference>
<dbReference type="NCBIfam" id="TIGR00364">
    <property type="entry name" value="7-cyano-7-deazaguanine synthase QueC"/>
    <property type="match status" value="1"/>
</dbReference>
<dbReference type="PANTHER" id="PTHR42914">
    <property type="entry name" value="7-CYANO-7-DEAZAGUANINE SYNTHASE"/>
    <property type="match status" value="1"/>
</dbReference>
<dbReference type="PANTHER" id="PTHR42914:SF1">
    <property type="entry name" value="7-CYANO-7-DEAZAGUANINE SYNTHASE"/>
    <property type="match status" value="1"/>
</dbReference>
<dbReference type="Pfam" id="PF06508">
    <property type="entry name" value="QueC"/>
    <property type="match status" value="1"/>
</dbReference>
<dbReference type="PIRSF" id="PIRSF006293">
    <property type="entry name" value="ExsB"/>
    <property type="match status" value="1"/>
</dbReference>
<dbReference type="SUPFAM" id="SSF52402">
    <property type="entry name" value="Adenine nucleotide alpha hydrolases-like"/>
    <property type="match status" value="1"/>
</dbReference>
<accession>Q5FQR2</accession>
<evidence type="ECO:0000255" key="1">
    <source>
        <dbReference type="HAMAP-Rule" id="MF_01633"/>
    </source>
</evidence>